<accession>Q6CDS6</accession>
<proteinExistence type="inferred from homology"/>
<keyword id="KW-0067">ATP-binding</keyword>
<keyword id="KW-0347">Helicase</keyword>
<keyword id="KW-0378">Hydrolase</keyword>
<keyword id="KW-0547">Nucleotide-binding</keyword>
<keyword id="KW-0539">Nucleus</keyword>
<keyword id="KW-1185">Reference proteome</keyword>
<keyword id="KW-0690">Ribosome biogenesis</keyword>
<keyword id="KW-0694">RNA-binding</keyword>
<keyword id="KW-0698">rRNA processing</keyword>
<reference key="1">
    <citation type="journal article" date="2004" name="Nature">
        <title>Genome evolution in yeasts.</title>
        <authorList>
            <person name="Dujon B."/>
            <person name="Sherman D."/>
            <person name="Fischer G."/>
            <person name="Durrens P."/>
            <person name="Casaregola S."/>
            <person name="Lafontaine I."/>
            <person name="de Montigny J."/>
            <person name="Marck C."/>
            <person name="Neuveglise C."/>
            <person name="Talla E."/>
            <person name="Goffard N."/>
            <person name="Frangeul L."/>
            <person name="Aigle M."/>
            <person name="Anthouard V."/>
            <person name="Babour A."/>
            <person name="Barbe V."/>
            <person name="Barnay S."/>
            <person name="Blanchin S."/>
            <person name="Beckerich J.-M."/>
            <person name="Beyne E."/>
            <person name="Bleykasten C."/>
            <person name="Boisrame A."/>
            <person name="Boyer J."/>
            <person name="Cattolico L."/>
            <person name="Confanioleri F."/>
            <person name="de Daruvar A."/>
            <person name="Despons L."/>
            <person name="Fabre E."/>
            <person name="Fairhead C."/>
            <person name="Ferry-Dumazet H."/>
            <person name="Groppi A."/>
            <person name="Hantraye F."/>
            <person name="Hennequin C."/>
            <person name="Jauniaux N."/>
            <person name="Joyet P."/>
            <person name="Kachouri R."/>
            <person name="Kerrest A."/>
            <person name="Koszul R."/>
            <person name="Lemaire M."/>
            <person name="Lesur I."/>
            <person name="Ma L."/>
            <person name="Muller H."/>
            <person name="Nicaud J.-M."/>
            <person name="Nikolski M."/>
            <person name="Oztas S."/>
            <person name="Ozier-Kalogeropoulos O."/>
            <person name="Pellenz S."/>
            <person name="Potier S."/>
            <person name="Richard G.-F."/>
            <person name="Straub M.-L."/>
            <person name="Suleau A."/>
            <person name="Swennen D."/>
            <person name="Tekaia F."/>
            <person name="Wesolowski-Louvel M."/>
            <person name="Westhof E."/>
            <person name="Wirth B."/>
            <person name="Zeniou-Meyer M."/>
            <person name="Zivanovic Y."/>
            <person name="Bolotin-Fukuhara M."/>
            <person name="Thierry A."/>
            <person name="Bouchier C."/>
            <person name="Caudron B."/>
            <person name="Scarpelli C."/>
            <person name="Gaillardin C."/>
            <person name="Weissenbach J."/>
            <person name="Wincker P."/>
            <person name="Souciet J.-L."/>
        </authorList>
    </citation>
    <scope>NUCLEOTIDE SEQUENCE [LARGE SCALE GENOMIC DNA]</scope>
    <source>
        <strain>CLIB 122 / E 150</strain>
    </source>
</reference>
<gene>
    <name type="primary">ROK1</name>
    <name type="ordered locus">YALI0B21538g</name>
</gene>
<protein>
    <recommendedName>
        <fullName>ATP-dependent RNA helicase ROK1</fullName>
        <ecNumber>3.6.4.13</ecNumber>
    </recommendedName>
</protein>
<organism>
    <name type="scientific">Yarrowia lipolytica (strain CLIB 122 / E 150)</name>
    <name type="common">Yeast</name>
    <name type="synonym">Candida lipolytica</name>
    <dbReference type="NCBI Taxonomy" id="284591"/>
    <lineage>
        <taxon>Eukaryota</taxon>
        <taxon>Fungi</taxon>
        <taxon>Dikarya</taxon>
        <taxon>Ascomycota</taxon>
        <taxon>Saccharomycotina</taxon>
        <taxon>Dipodascomycetes</taxon>
        <taxon>Dipodascales</taxon>
        <taxon>Dipodascales incertae sedis</taxon>
        <taxon>Yarrowia</taxon>
    </lineage>
</organism>
<sequence>MDIFKVLSRGATIQRNGKHRKDLTLLNHAAPKDTQDNVDIEVARETDFFKTKTDTYSKKRVAEEAELDNEEEEEAPPPIISTPEEAVVFRNKHKINITGEDSPLPIGSFEDLITRFNLHPYLLANLKKNKYTDPTPIQCESIPTMLNGRDLIACAPTGSGKTMAYSIPMVEMLGKKKGSKDAKKGIKALVVAPTKELASQIFNAVFSLCVGVGKKKDELKPCLLDKSTADKLRNGKVSSQKYDICITTPLRLVSALNDGSLDLGSLDLVIFDEADKLFEKGFATQVDDILAACPSGIQKTLFSATIPASVEQLANSIMSTDPLRIIIGNKQAAAQTVEQKLVYAGNEEGKLVAIRQMAREGQLVAPVIIFLQSIDRAKALFKELVFDGINVDQIHGDMTAAKRASVIDRFRNGEVWVLICTDVLARGIDFRGINLVINYDVPQSAQSYVHRIGRTGRAGRLGKAVTFFTKEDATNVKVVVNVMKQSGQEVPDWLNNLAPLTQKERDNIKNRPIKRKKISTQHALANNKKKRAKQQMKGLKKMKKDDE</sequence>
<dbReference type="EC" id="3.6.4.13"/>
<dbReference type="EMBL" id="CR382128">
    <property type="protein sequence ID" value="CAG83439.1"/>
    <property type="molecule type" value="Genomic_DNA"/>
</dbReference>
<dbReference type="RefSeq" id="XP_501186.1">
    <property type="nucleotide sequence ID" value="XM_501186.1"/>
</dbReference>
<dbReference type="SMR" id="Q6CDS6"/>
<dbReference type="FunCoup" id="Q6CDS6">
    <property type="interactions" value="1073"/>
</dbReference>
<dbReference type="STRING" id="284591.Q6CDS6"/>
<dbReference type="EnsemblFungi" id="CAG83439">
    <property type="protein sequence ID" value="CAG83439"/>
    <property type="gene ID" value="YALI0_B21538g"/>
</dbReference>
<dbReference type="KEGG" id="yli:2907486"/>
<dbReference type="VEuPathDB" id="FungiDB:YALI0_B21538g"/>
<dbReference type="HOGENOM" id="CLU_003041_1_4_1"/>
<dbReference type="InParanoid" id="Q6CDS6"/>
<dbReference type="OMA" id="EMAHSIM"/>
<dbReference type="OrthoDB" id="83996at4891"/>
<dbReference type="Proteomes" id="UP000001300">
    <property type="component" value="Chromosome B"/>
</dbReference>
<dbReference type="GO" id="GO:0005730">
    <property type="term" value="C:nucleolus"/>
    <property type="evidence" value="ECO:0007669"/>
    <property type="project" value="UniProtKB-SubCell"/>
</dbReference>
<dbReference type="GO" id="GO:0032040">
    <property type="term" value="C:small-subunit processome"/>
    <property type="evidence" value="ECO:0007669"/>
    <property type="project" value="EnsemblFungi"/>
</dbReference>
<dbReference type="GO" id="GO:0005524">
    <property type="term" value="F:ATP binding"/>
    <property type="evidence" value="ECO:0007669"/>
    <property type="project" value="UniProtKB-KW"/>
</dbReference>
<dbReference type="GO" id="GO:0016887">
    <property type="term" value="F:ATP hydrolysis activity"/>
    <property type="evidence" value="ECO:0007669"/>
    <property type="project" value="RHEA"/>
</dbReference>
<dbReference type="GO" id="GO:0003723">
    <property type="term" value="F:RNA binding"/>
    <property type="evidence" value="ECO:0007669"/>
    <property type="project" value="UniProtKB-KW"/>
</dbReference>
<dbReference type="GO" id="GO:0003724">
    <property type="term" value="F:RNA helicase activity"/>
    <property type="evidence" value="ECO:0007669"/>
    <property type="project" value="UniProtKB-EC"/>
</dbReference>
<dbReference type="GO" id="GO:0000480">
    <property type="term" value="P:endonucleolytic cleavage in 5'-ETS of tricistronic rRNA transcript (SSU-rRNA, 5.8S rRNA, LSU-rRNA)"/>
    <property type="evidence" value="ECO:0007669"/>
    <property type="project" value="EnsemblFungi"/>
</dbReference>
<dbReference type="GO" id="GO:0000447">
    <property type="term" value="P:endonucleolytic cleavage in ITS1 to separate SSU-rRNA from 5.8S rRNA and LSU-rRNA from tricistronic rRNA transcript (SSU-rRNA, 5.8S rRNA, LSU-rRNA)"/>
    <property type="evidence" value="ECO:0007669"/>
    <property type="project" value="EnsemblFungi"/>
</dbReference>
<dbReference type="GO" id="GO:0000472">
    <property type="term" value="P:endonucleolytic cleavage to generate mature 5'-end of SSU-rRNA from (SSU-rRNA, 5.8S rRNA, LSU-rRNA)"/>
    <property type="evidence" value="ECO:0007669"/>
    <property type="project" value="EnsemblFungi"/>
</dbReference>
<dbReference type="GO" id="GO:0030490">
    <property type="term" value="P:maturation of SSU-rRNA"/>
    <property type="evidence" value="ECO:0000318"/>
    <property type="project" value="GO_Central"/>
</dbReference>
<dbReference type="GO" id="GO:0048254">
    <property type="term" value="P:snoRNA localization"/>
    <property type="evidence" value="ECO:0007669"/>
    <property type="project" value="EnsemblFungi"/>
</dbReference>
<dbReference type="CDD" id="cd17957">
    <property type="entry name" value="DEADc_DDX52"/>
    <property type="match status" value="1"/>
</dbReference>
<dbReference type="CDD" id="cd18787">
    <property type="entry name" value="SF2_C_DEAD"/>
    <property type="match status" value="1"/>
</dbReference>
<dbReference type="Gene3D" id="3.40.50.300">
    <property type="entry name" value="P-loop containing nucleotide triphosphate hydrolases"/>
    <property type="match status" value="2"/>
</dbReference>
<dbReference type="InterPro" id="IPR044764">
    <property type="entry name" value="DDX52/Rok1_DEADc"/>
</dbReference>
<dbReference type="InterPro" id="IPR011545">
    <property type="entry name" value="DEAD/DEAH_box_helicase_dom"/>
</dbReference>
<dbReference type="InterPro" id="IPR050079">
    <property type="entry name" value="DEAD_box_RNA_helicase"/>
</dbReference>
<dbReference type="InterPro" id="IPR014001">
    <property type="entry name" value="Helicase_ATP-bd"/>
</dbReference>
<dbReference type="InterPro" id="IPR001650">
    <property type="entry name" value="Helicase_C-like"/>
</dbReference>
<dbReference type="InterPro" id="IPR027417">
    <property type="entry name" value="P-loop_NTPase"/>
</dbReference>
<dbReference type="InterPro" id="IPR000629">
    <property type="entry name" value="RNA-helicase_DEAD-box_CS"/>
</dbReference>
<dbReference type="InterPro" id="IPR014014">
    <property type="entry name" value="RNA_helicase_DEAD_Q_motif"/>
</dbReference>
<dbReference type="PANTHER" id="PTHR47959">
    <property type="entry name" value="ATP-DEPENDENT RNA HELICASE RHLE-RELATED"/>
    <property type="match status" value="1"/>
</dbReference>
<dbReference type="PANTHER" id="PTHR47959:SF15">
    <property type="entry name" value="RNA HELICASE"/>
    <property type="match status" value="1"/>
</dbReference>
<dbReference type="Pfam" id="PF00270">
    <property type="entry name" value="DEAD"/>
    <property type="match status" value="1"/>
</dbReference>
<dbReference type="Pfam" id="PF00271">
    <property type="entry name" value="Helicase_C"/>
    <property type="match status" value="1"/>
</dbReference>
<dbReference type="SMART" id="SM00487">
    <property type="entry name" value="DEXDc"/>
    <property type="match status" value="1"/>
</dbReference>
<dbReference type="SMART" id="SM00490">
    <property type="entry name" value="HELICc"/>
    <property type="match status" value="1"/>
</dbReference>
<dbReference type="SUPFAM" id="SSF52540">
    <property type="entry name" value="P-loop containing nucleoside triphosphate hydrolases"/>
    <property type="match status" value="1"/>
</dbReference>
<dbReference type="PROSITE" id="PS00039">
    <property type="entry name" value="DEAD_ATP_HELICASE"/>
    <property type="match status" value="1"/>
</dbReference>
<dbReference type="PROSITE" id="PS51192">
    <property type="entry name" value="HELICASE_ATP_BIND_1"/>
    <property type="match status" value="1"/>
</dbReference>
<dbReference type="PROSITE" id="PS51194">
    <property type="entry name" value="HELICASE_CTER"/>
    <property type="match status" value="1"/>
</dbReference>
<dbReference type="PROSITE" id="PS51195">
    <property type="entry name" value="Q_MOTIF"/>
    <property type="match status" value="1"/>
</dbReference>
<feature type="chain" id="PRO_0000232308" description="ATP-dependent RNA helicase ROK1">
    <location>
        <begin position="1"/>
        <end position="547"/>
    </location>
</feature>
<feature type="domain" description="Helicase ATP-binding" evidence="2">
    <location>
        <begin position="142"/>
        <end position="324"/>
    </location>
</feature>
<feature type="domain" description="Helicase C-terminal" evidence="3">
    <location>
        <begin position="336"/>
        <end position="498"/>
    </location>
</feature>
<feature type="region of interest" description="Disordered" evidence="4">
    <location>
        <begin position="511"/>
        <end position="547"/>
    </location>
</feature>
<feature type="short sequence motif" description="Q motif">
    <location>
        <begin position="111"/>
        <end position="139"/>
    </location>
</feature>
<feature type="short sequence motif" description="DEAD box">
    <location>
        <begin position="272"/>
        <end position="275"/>
    </location>
</feature>
<feature type="compositionally biased region" description="Basic residues" evidence="4">
    <location>
        <begin position="527"/>
        <end position="547"/>
    </location>
</feature>
<feature type="binding site" evidence="2">
    <location>
        <begin position="155"/>
        <end position="162"/>
    </location>
    <ligand>
        <name>ATP</name>
        <dbReference type="ChEBI" id="CHEBI:30616"/>
    </ligand>
</feature>
<evidence type="ECO:0000250" key="1"/>
<evidence type="ECO:0000255" key="2">
    <source>
        <dbReference type="PROSITE-ProRule" id="PRU00541"/>
    </source>
</evidence>
<evidence type="ECO:0000255" key="3">
    <source>
        <dbReference type="PROSITE-ProRule" id="PRU00542"/>
    </source>
</evidence>
<evidence type="ECO:0000256" key="4">
    <source>
        <dbReference type="SAM" id="MobiDB-lite"/>
    </source>
</evidence>
<evidence type="ECO:0000305" key="5"/>
<name>ROK1_YARLI</name>
<comment type="function">
    <text>ATP-dependent RNA helicase involved in 40S ribosomal subunit biogenesis. Required for the processing and cleavage of 35S pre-rRNA at sites A0, A1, and A2, leading to mature 18S rRNA.</text>
</comment>
<comment type="catalytic activity">
    <reaction>
        <text>ATP + H2O = ADP + phosphate + H(+)</text>
        <dbReference type="Rhea" id="RHEA:13065"/>
        <dbReference type="ChEBI" id="CHEBI:15377"/>
        <dbReference type="ChEBI" id="CHEBI:15378"/>
        <dbReference type="ChEBI" id="CHEBI:30616"/>
        <dbReference type="ChEBI" id="CHEBI:43474"/>
        <dbReference type="ChEBI" id="CHEBI:456216"/>
        <dbReference type="EC" id="3.6.4.13"/>
    </reaction>
</comment>
<comment type="subunit">
    <text evidence="1">Interacts with the U3 snoRNA and is associated with the 90S and 40S pre-ribosomes.</text>
</comment>
<comment type="subcellular location">
    <subcellularLocation>
        <location evidence="1">Nucleus</location>
        <location evidence="1">Nucleolus</location>
    </subcellularLocation>
</comment>
<comment type="domain">
    <text>The Q motif is unique to and characteristic of the DEAD box family of RNA helicases and controls ATP binding and hydrolysis.</text>
</comment>
<comment type="similarity">
    <text evidence="5">Belongs to the DEAD box helicase family. DDX52/ROK1 subfamily.</text>
</comment>